<geneLocation type="chloroplast"/>
<organism>
    <name type="scientific">Salacca zalacca</name>
    <name type="common">Snake palm</name>
    <name type="synonym">Salacca edulis</name>
    <dbReference type="NCBI Taxonomy" id="145711"/>
    <lineage>
        <taxon>Eukaryota</taxon>
        <taxon>Viridiplantae</taxon>
        <taxon>Streptophyta</taxon>
        <taxon>Embryophyta</taxon>
        <taxon>Tracheophyta</taxon>
        <taxon>Spermatophyta</taxon>
        <taxon>Magnoliopsida</taxon>
        <taxon>Liliopsida</taxon>
        <taxon>Arecaceae</taxon>
        <taxon>Calamoideae</taxon>
        <taxon>Calameae</taxon>
        <taxon>Salaccinae</taxon>
        <taxon>Salacca</taxon>
    </lineage>
</organism>
<name>ATPB_SALZA</name>
<protein>
    <recommendedName>
        <fullName evidence="1">ATP synthase subunit beta, chloroplastic</fullName>
        <ecNumber evidence="1">7.1.2.2</ecNumber>
    </recommendedName>
    <alternativeName>
        <fullName evidence="1">ATP synthase F1 sector subunit beta</fullName>
    </alternativeName>
    <alternativeName>
        <fullName evidence="1">F-ATPase subunit beta</fullName>
    </alternativeName>
</protein>
<keyword id="KW-0066">ATP synthesis</keyword>
<keyword id="KW-0067">ATP-binding</keyword>
<keyword id="KW-0139">CF(1)</keyword>
<keyword id="KW-0150">Chloroplast</keyword>
<keyword id="KW-0375">Hydrogen ion transport</keyword>
<keyword id="KW-0406">Ion transport</keyword>
<keyword id="KW-0472">Membrane</keyword>
<keyword id="KW-0547">Nucleotide-binding</keyword>
<keyword id="KW-0934">Plastid</keyword>
<keyword id="KW-0793">Thylakoid</keyword>
<keyword id="KW-1278">Translocase</keyword>
<keyword id="KW-0813">Transport</keyword>
<gene>
    <name evidence="1" type="primary">atpB</name>
</gene>
<feature type="chain" id="PRO_0000254520" description="ATP synthase subunit beta, chloroplastic">
    <location>
        <begin position="1"/>
        <end position="498"/>
    </location>
</feature>
<feature type="binding site" evidence="1">
    <location>
        <begin position="172"/>
        <end position="179"/>
    </location>
    <ligand>
        <name>ATP</name>
        <dbReference type="ChEBI" id="CHEBI:30616"/>
    </ligand>
</feature>
<comment type="function">
    <text evidence="1">Produces ATP from ADP in the presence of a proton gradient across the membrane. The catalytic sites are hosted primarily by the beta subunits.</text>
</comment>
<comment type="catalytic activity">
    <reaction evidence="1">
        <text>ATP + H2O + 4 H(+)(in) = ADP + phosphate + 5 H(+)(out)</text>
        <dbReference type="Rhea" id="RHEA:57720"/>
        <dbReference type="ChEBI" id="CHEBI:15377"/>
        <dbReference type="ChEBI" id="CHEBI:15378"/>
        <dbReference type="ChEBI" id="CHEBI:30616"/>
        <dbReference type="ChEBI" id="CHEBI:43474"/>
        <dbReference type="ChEBI" id="CHEBI:456216"/>
        <dbReference type="EC" id="7.1.2.2"/>
    </reaction>
</comment>
<comment type="subunit">
    <text evidence="1">F-type ATPases have 2 components, CF(1) - the catalytic core - and CF(0) - the membrane proton channel. CF(1) has five subunits: alpha(3), beta(3), gamma(1), delta(1), epsilon(1). CF(0) has four main subunits: a(1), b(1), b'(1) and c(9-12).</text>
</comment>
<comment type="subcellular location">
    <subcellularLocation>
        <location evidence="1">Plastid</location>
        <location evidence="1">Chloroplast thylakoid membrane</location>
        <topology evidence="1">Peripheral membrane protein</topology>
    </subcellularLocation>
</comment>
<comment type="similarity">
    <text evidence="1">Belongs to the ATPase alpha/beta chains family.</text>
</comment>
<evidence type="ECO:0000255" key="1">
    <source>
        <dbReference type="HAMAP-Rule" id="MF_01347"/>
    </source>
</evidence>
<sequence length="498" mass="53787">MRTNPTTSSPVVSTLEEKNLGRIAQIIGPVLDVVFPPGKMPNIYNALVVEGRDTVGQQINVTCEVQQLLGNNRVRAVAMSATDGLMRGMEVIDTGAPLSVPVGGATLGRIFNVLGEPVDNLGPVDTRTTSPIHRSAPAFIQLDTKLSIFETGIKVVDLLAPYRRGGKIGLFGGAGVGKTVLIMELINNIAKAHGGVSVFGGVGERTREGNDLYMEMKESGVINEKNIAESKVALVYGQMNEPPGARMRVGLTALTMAEYFRDVNEQDVLLFIDNIFRFVQAGSEVSALLGRMPSAVGYQPTLSTEMGSLQERITSTKEGSITSIQAVYVPADDLTDPAPATTFAHLDATTVLSRVLAAKGIYPAVDPLDSTSTMLQPRIVGEEHYETAQRVKQTSQRYKELQDIIAILGLDELSEEDRLTVARARKIERFLSQPFFVAEVFTGSPGKYVGLAETIRGFQLILSGELDGLPEQAFYLVGNIDEATAKAMNLEVESKLKK</sequence>
<reference key="1">
    <citation type="journal article" date="2002" name="Syst. Biol.">
        <title>A molecular phylogenetic study of the Palmae (Arecaceae) based on atpB, rbcL, and 18S nrDNA sequences.</title>
        <authorList>
            <person name="Hahn W.J."/>
        </authorList>
    </citation>
    <scope>NUCLEOTIDE SEQUENCE [GENOMIC DNA]</scope>
</reference>
<dbReference type="EC" id="7.1.2.2" evidence="1"/>
<dbReference type="EMBL" id="AY012415">
    <property type="protein sequence ID" value="AAK14670.1"/>
    <property type="molecule type" value="Genomic_DNA"/>
</dbReference>
<dbReference type="SMR" id="Q7HHY4"/>
<dbReference type="GO" id="GO:0009535">
    <property type="term" value="C:chloroplast thylakoid membrane"/>
    <property type="evidence" value="ECO:0007669"/>
    <property type="project" value="UniProtKB-SubCell"/>
</dbReference>
<dbReference type="GO" id="GO:0005739">
    <property type="term" value="C:mitochondrion"/>
    <property type="evidence" value="ECO:0007669"/>
    <property type="project" value="GOC"/>
</dbReference>
<dbReference type="GO" id="GO:0045259">
    <property type="term" value="C:proton-transporting ATP synthase complex"/>
    <property type="evidence" value="ECO:0007669"/>
    <property type="project" value="UniProtKB-KW"/>
</dbReference>
<dbReference type="GO" id="GO:0005524">
    <property type="term" value="F:ATP binding"/>
    <property type="evidence" value="ECO:0007669"/>
    <property type="project" value="UniProtKB-UniRule"/>
</dbReference>
<dbReference type="GO" id="GO:0016887">
    <property type="term" value="F:ATP hydrolysis activity"/>
    <property type="evidence" value="ECO:0007669"/>
    <property type="project" value="InterPro"/>
</dbReference>
<dbReference type="GO" id="GO:0046933">
    <property type="term" value="F:proton-transporting ATP synthase activity, rotational mechanism"/>
    <property type="evidence" value="ECO:0007669"/>
    <property type="project" value="UniProtKB-UniRule"/>
</dbReference>
<dbReference type="GO" id="GO:0042776">
    <property type="term" value="P:proton motive force-driven mitochondrial ATP synthesis"/>
    <property type="evidence" value="ECO:0007669"/>
    <property type="project" value="TreeGrafter"/>
</dbReference>
<dbReference type="CDD" id="cd18110">
    <property type="entry name" value="ATP-synt_F1_beta_C"/>
    <property type="match status" value="1"/>
</dbReference>
<dbReference type="CDD" id="cd18115">
    <property type="entry name" value="ATP-synt_F1_beta_N"/>
    <property type="match status" value="1"/>
</dbReference>
<dbReference type="CDD" id="cd01133">
    <property type="entry name" value="F1-ATPase_beta_CD"/>
    <property type="match status" value="1"/>
</dbReference>
<dbReference type="FunFam" id="1.10.1140.10:FF:000001">
    <property type="entry name" value="ATP synthase subunit beta"/>
    <property type="match status" value="1"/>
</dbReference>
<dbReference type="FunFam" id="3.40.50.12240:FF:000006">
    <property type="entry name" value="ATP synthase subunit beta"/>
    <property type="match status" value="1"/>
</dbReference>
<dbReference type="FunFam" id="3.40.50.300:FF:000004">
    <property type="entry name" value="ATP synthase subunit beta"/>
    <property type="match status" value="1"/>
</dbReference>
<dbReference type="FunFam" id="2.40.10.170:FF:000002">
    <property type="entry name" value="ATP synthase subunit beta, chloroplastic"/>
    <property type="match status" value="1"/>
</dbReference>
<dbReference type="Gene3D" id="2.40.10.170">
    <property type="match status" value="1"/>
</dbReference>
<dbReference type="Gene3D" id="1.10.1140.10">
    <property type="entry name" value="Bovine Mitochondrial F1-atpase, Atp Synthase Beta Chain, Chain D, domain 3"/>
    <property type="match status" value="1"/>
</dbReference>
<dbReference type="Gene3D" id="3.40.50.300">
    <property type="entry name" value="P-loop containing nucleotide triphosphate hydrolases"/>
    <property type="match status" value="1"/>
</dbReference>
<dbReference type="HAMAP" id="MF_01347">
    <property type="entry name" value="ATP_synth_beta_bact"/>
    <property type="match status" value="1"/>
</dbReference>
<dbReference type="InterPro" id="IPR003593">
    <property type="entry name" value="AAA+_ATPase"/>
</dbReference>
<dbReference type="InterPro" id="IPR055190">
    <property type="entry name" value="ATP-synt_VA_C"/>
</dbReference>
<dbReference type="InterPro" id="IPR005722">
    <property type="entry name" value="ATP_synth_F1_bsu"/>
</dbReference>
<dbReference type="InterPro" id="IPR020003">
    <property type="entry name" value="ATPase_a/bsu_AS"/>
</dbReference>
<dbReference type="InterPro" id="IPR050053">
    <property type="entry name" value="ATPase_alpha/beta_chains"/>
</dbReference>
<dbReference type="InterPro" id="IPR004100">
    <property type="entry name" value="ATPase_F1/V1/A1_a/bsu_N"/>
</dbReference>
<dbReference type="InterPro" id="IPR036121">
    <property type="entry name" value="ATPase_F1/V1/A1_a/bsu_N_sf"/>
</dbReference>
<dbReference type="InterPro" id="IPR000194">
    <property type="entry name" value="ATPase_F1/V1/A1_a/bsu_nucl-bd"/>
</dbReference>
<dbReference type="InterPro" id="IPR024034">
    <property type="entry name" value="ATPase_F1/V1_b/a_C"/>
</dbReference>
<dbReference type="InterPro" id="IPR027417">
    <property type="entry name" value="P-loop_NTPase"/>
</dbReference>
<dbReference type="NCBIfam" id="TIGR01039">
    <property type="entry name" value="atpD"/>
    <property type="match status" value="1"/>
</dbReference>
<dbReference type="PANTHER" id="PTHR15184">
    <property type="entry name" value="ATP SYNTHASE"/>
    <property type="match status" value="1"/>
</dbReference>
<dbReference type="PANTHER" id="PTHR15184:SF71">
    <property type="entry name" value="ATP SYNTHASE SUBUNIT BETA, MITOCHONDRIAL"/>
    <property type="match status" value="1"/>
</dbReference>
<dbReference type="Pfam" id="PF00006">
    <property type="entry name" value="ATP-synt_ab"/>
    <property type="match status" value="1"/>
</dbReference>
<dbReference type="Pfam" id="PF02874">
    <property type="entry name" value="ATP-synt_ab_N"/>
    <property type="match status" value="1"/>
</dbReference>
<dbReference type="Pfam" id="PF22919">
    <property type="entry name" value="ATP-synt_VA_C"/>
    <property type="match status" value="1"/>
</dbReference>
<dbReference type="SMART" id="SM00382">
    <property type="entry name" value="AAA"/>
    <property type="match status" value="1"/>
</dbReference>
<dbReference type="SUPFAM" id="SSF47917">
    <property type="entry name" value="C-terminal domain of alpha and beta subunits of F1 ATP synthase"/>
    <property type="match status" value="1"/>
</dbReference>
<dbReference type="SUPFAM" id="SSF50615">
    <property type="entry name" value="N-terminal domain of alpha and beta subunits of F1 ATP synthase"/>
    <property type="match status" value="1"/>
</dbReference>
<dbReference type="SUPFAM" id="SSF52540">
    <property type="entry name" value="P-loop containing nucleoside triphosphate hydrolases"/>
    <property type="match status" value="1"/>
</dbReference>
<dbReference type="PROSITE" id="PS00152">
    <property type="entry name" value="ATPASE_ALPHA_BETA"/>
    <property type="match status" value="1"/>
</dbReference>
<proteinExistence type="inferred from homology"/>
<accession>Q7HHY4</accession>